<sequence>MGKNLLQQRAGKGSPTFRSPSWLRIGKVRYPNIFGHLVGKVIDIVHNPGMNAPVAIIKLENGTKFLTQAIQGLVINQKIEFGKGSPIANGNVIEIGDAPEGTIVCNVEENFGDGGKYARSAGSYAVVVGKSGDKVLIKLPSDKIKAVSNKARATVGVVAGGGVVEKPLLKAGANYWKYKVKAKKWPIVRGVAMNVVDHPHGGGLHQSVSRPSTVSRNAPPGRKVGHIAARRTGRKEGK</sequence>
<reference key="1">
    <citation type="journal article" date="2009" name="Proc. Natl. Acad. Sci. U.S.A.">
        <title>Biogeography of the Sulfolobus islandicus pan-genome.</title>
        <authorList>
            <person name="Reno M.L."/>
            <person name="Held N.L."/>
            <person name="Fields C.J."/>
            <person name="Burke P.V."/>
            <person name="Whitaker R.J."/>
        </authorList>
    </citation>
    <scope>NUCLEOTIDE SEQUENCE [LARGE SCALE GENOMIC DNA]</scope>
    <source>
        <strain>M.16.4 / Kamchatka #3</strain>
    </source>
</reference>
<evidence type="ECO:0000255" key="1">
    <source>
        <dbReference type="HAMAP-Rule" id="MF_01320"/>
    </source>
</evidence>
<evidence type="ECO:0000256" key="2">
    <source>
        <dbReference type="SAM" id="MobiDB-lite"/>
    </source>
</evidence>
<evidence type="ECO:0000305" key="3"/>
<organism>
    <name type="scientific">Saccharolobus islandicus (strain M.16.4 / Kamchatka #3)</name>
    <name type="common">Sulfolobus islandicus</name>
    <dbReference type="NCBI Taxonomy" id="426118"/>
    <lineage>
        <taxon>Archaea</taxon>
        <taxon>Thermoproteota</taxon>
        <taxon>Thermoprotei</taxon>
        <taxon>Sulfolobales</taxon>
        <taxon>Sulfolobaceae</taxon>
        <taxon>Saccharolobus</taxon>
    </lineage>
</organism>
<keyword id="KW-0687">Ribonucleoprotein</keyword>
<keyword id="KW-0689">Ribosomal protein</keyword>
<keyword id="KW-0694">RNA-binding</keyword>
<keyword id="KW-0699">rRNA-binding</keyword>
<dbReference type="EMBL" id="CP001402">
    <property type="protein sequence ID" value="ACR42023.1"/>
    <property type="molecule type" value="Genomic_DNA"/>
</dbReference>
<dbReference type="RefSeq" id="WP_012711421.1">
    <property type="nucleotide sequence ID" value="NC_012726.1"/>
</dbReference>
<dbReference type="SMR" id="C4KHF9"/>
<dbReference type="KEGG" id="sid:M164_1417"/>
<dbReference type="HOGENOM" id="CLU_036235_0_1_2"/>
<dbReference type="Proteomes" id="UP000001479">
    <property type="component" value="Chromosome"/>
</dbReference>
<dbReference type="GO" id="GO:0022625">
    <property type="term" value="C:cytosolic large ribosomal subunit"/>
    <property type="evidence" value="ECO:0007669"/>
    <property type="project" value="TreeGrafter"/>
</dbReference>
<dbReference type="GO" id="GO:0019843">
    <property type="term" value="F:rRNA binding"/>
    <property type="evidence" value="ECO:0007669"/>
    <property type="project" value="UniProtKB-UniRule"/>
</dbReference>
<dbReference type="GO" id="GO:0003735">
    <property type="term" value="F:structural constituent of ribosome"/>
    <property type="evidence" value="ECO:0007669"/>
    <property type="project" value="InterPro"/>
</dbReference>
<dbReference type="GO" id="GO:0002181">
    <property type="term" value="P:cytoplasmic translation"/>
    <property type="evidence" value="ECO:0007669"/>
    <property type="project" value="TreeGrafter"/>
</dbReference>
<dbReference type="FunFam" id="2.30.30.30:FF:000001">
    <property type="entry name" value="50S ribosomal protein L2"/>
    <property type="match status" value="1"/>
</dbReference>
<dbReference type="FunFam" id="4.10.950.10:FF:000002">
    <property type="entry name" value="60S ribosomal protein L2"/>
    <property type="match status" value="1"/>
</dbReference>
<dbReference type="Gene3D" id="2.30.30.30">
    <property type="match status" value="1"/>
</dbReference>
<dbReference type="Gene3D" id="2.40.50.140">
    <property type="entry name" value="Nucleic acid-binding proteins"/>
    <property type="match status" value="1"/>
</dbReference>
<dbReference type="Gene3D" id="4.10.950.10">
    <property type="entry name" value="Ribosomal protein L2, domain 3"/>
    <property type="match status" value="1"/>
</dbReference>
<dbReference type="HAMAP" id="MF_01320_A">
    <property type="entry name" value="Ribosomal_uL2_A"/>
    <property type="match status" value="1"/>
</dbReference>
<dbReference type="InterPro" id="IPR012340">
    <property type="entry name" value="NA-bd_OB-fold"/>
</dbReference>
<dbReference type="InterPro" id="IPR014722">
    <property type="entry name" value="Rib_uL2_dom2"/>
</dbReference>
<dbReference type="InterPro" id="IPR002171">
    <property type="entry name" value="Ribosomal_uL2"/>
</dbReference>
<dbReference type="InterPro" id="IPR023672">
    <property type="entry name" value="Ribosomal_uL2_arc_euk"/>
</dbReference>
<dbReference type="InterPro" id="IPR022669">
    <property type="entry name" value="Ribosomal_uL2_C"/>
</dbReference>
<dbReference type="InterPro" id="IPR014726">
    <property type="entry name" value="Ribosomal_uL2_dom3"/>
</dbReference>
<dbReference type="InterPro" id="IPR022666">
    <property type="entry name" value="Ribosomal_uL2_RNA-bd_dom"/>
</dbReference>
<dbReference type="InterPro" id="IPR008991">
    <property type="entry name" value="Translation_prot_SH3-like_sf"/>
</dbReference>
<dbReference type="NCBIfam" id="NF007180">
    <property type="entry name" value="PRK09612.1"/>
    <property type="match status" value="1"/>
</dbReference>
<dbReference type="PANTHER" id="PTHR13691:SF16">
    <property type="entry name" value="LARGE RIBOSOMAL SUBUNIT PROTEIN UL2"/>
    <property type="match status" value="1"/>
</dbReference>
<dbReference type="PANTHER" id="PTHR13691">
    <property type="entry name" value="RIBOSOMAL PROTEIN L2"/>
    <property type="match status" value="1"/>
</dbReference>
<dbReference type="Pfam" id="PF00181">
    <property type="entry name" value="Ribosomal_L2"/>
    <property type="match status" value="1"/>
</dbReference>
<dbReference type="Pfam" id="PF03947">
    <property type="entry name" value="Ribosomal_L2_C"/>
    <property type="match status" value="1"/>
</dbReference>
<dbReference type="PIRSF" id="PIRSF002158">
    <property type="entry name" value="Ribosomal_L2"/>
    <property type="match status" value="1"/>
</dbReference>
<dbReference type="SMART" id="SM01383">
    <property type="entry name" value="Ribosomal_L2"/>
    <property type="match status" value="1"/>
</dbReference>
<dbReference type="SMART" id="SM01382">
    <property type="entry name" value="Ribosomal_L2_C"/>
    <property type="match status" value="1"/>
</dbReference>
<dbReference type="SUPFAM" id="SSF50249">
    <property type="entry name" value="Nucleic acid-binding proteins"/>
    <property type="match status" value="1"/>
</dbReference>
<dbReference type="SUPFAM" id="SSF50104">
    <property type="entry name" value="Translation proteins SH3-like domain"/>
    <property type="match status" value="1"/>
</dbReference>
<gene>
    <name evidence="1" type="primary">rpl2</name>
    <name type="ordered locus">M164_1417</name>
</gene>
<comment type="function">
    <text evidence="1">One of the primary rRNA binding proteins. Required for association of the 30S and 50S subunits to form the 70S ribosome, for tRNA binding and peptide bond formation. It has been suggested to have peptidyltransferase activity; this is somewhat controversial. Makes several contacts with the 16S rRNA in the 70S ribosome.</text>
</comment>
<comment type="subunit">
    <text evidence="1">Part of the 50S ribosomal subunit. Forms a bridge to the 30S subunit in the 70S ribosome.</text>
</comment>
<comment type="similarity">
    <text evidence="1">Belongs to the universal ribosomal protein uL2 family.</text>
</comment>
<name>RL2_SACI6</name>
<feature type="chain" id="PRO_1000214461" description="Large ribosomal subunit protein uL2">
    <location>
        <begin position="1"/>
        <end position="238"/>
    </location>
</feature>
<feature type="region of interest" description="Disordered" evidence="2">
    <location>
        <begin position="200"/>
        <end position="238"/>
    </location>
</feature>
<feature type="compositionally biased region" description="Polar residues" evidence="2">
    <location>
        <begin position="206"/>
        <end position="216"/>
    </location>
</feature>
<feature type="compositionally biased region" description="Basic residues" evidence="2">
    <location>
        <begin position="223"/>
        <end position="238"/>
    </location>
</feature>
<protein>
    <recommendedName>
        <fullName evidence="1">Large ribosomal subunit protein uL2</fullName>
    </recommendedName>
    <alternativeName>
        <fullName evidence="3">50S ribosomal protein L2</fullName>
    </alternativeName>
</protein>
<accession>C4KHF9</accession>
<proteinExistence type="inferred from homology"/>